<comment type="function">
    <text evidence="1">Catalyzes the phosphorylation of methylthioribose into methylthioribose-1-phosphate.</text>
</comment>
<comment type="catalytic activity">
    <reaction evidence="1">
        <text>5-(methylsulfanyl)-D-ribose + ATP = 5-(methylsulfanyl)-alpha-D-ribose 1-phosphate + ADP + H(+)</text>
        <dbReference type="Rhea" id="RHEA:22312"/>
        <dbReference type="ChEBI" id="CHEBI:15378"/>
        <dbReference type="ChEBI" id="CHEBI:30616"/>
        <dbReference type="ChEBI" id="CHEBI:58533"/>
        <dbReference type="ChEBI" id="CHEBI:78440"/>
        <dbReference type="ChEBI" id="CHEBI:456216"/>
        <dbReference type="EC" id="2.7.1.100"/>
    </reaction>
</comment>
<comment type="pathway">
    <text evidence="1">Amino-acid biosynthesis; L-methionine biosynthesis via salvage pathway; S-methyl-5-thio-alpha-D-ribose 1-phosphate from S-methyl-5'-thioadenosine (hydrolase route): step 2/2.</text>
</comment>
<comment type="subunit">
    <text evidence="1">Homodimer.</text>
</comment>
<comment type="similarity">
    <text evidence="1">Belongs to the methylthioribose kinase family.</text>
</comment>
<keyword id="KW-0028">Amino-acid biosynthesis</keyword>
<keyword id="KW-0067">ATP-binding</keyword>
<keyword id="KW-0418">Kinase</keyword>
<keyword id="KW-0486">Methionine biosynthesis</keyword>
<keyword id="KW-0547">Nucleotide-binding</keyword>
<keyword id="KW-0808">Transferase</keyword>
<name>MTNK_GEOTN</name>
<sequence>MAIIQSSAYEPLTEQKATALAVRLGLFRDGTPLLCREIGDGNLNLVFHVVDQETKQGIIIKQALPYAKVVGESWPLTLKRAVIESNALRTFASYVPQYVPKVYYSDESLAITVMEDLSYLQIARKGLIEGKTYPLLSRHIGEFIAKTAFYTSDFGMNQQEKKKLAQSFVNPELCKITEDLVFTDPFFDHDSNNFEDELHLDVETLWNDDRLHLEAAKLKRKFLTEADVLLHGDLHTGSIFASDDETKVIDPEFAFYGPIGFDLGHFIANLLLNALSRPESERRPLFDHIDRTWAVFTSVFSELWRTESVETYAATPGLLDDVLRQTFIDAVGFAGCEVIRRTIGLAHVADLDGIEQKDERLAAKRHALRLGRRLIVERAELDGTEDFRRLFVETER</sequence>
<gene>
    <name evidence="1" type="primary">mtnK</name>
    <name type="ordered locus">GTNG_0838</name>
</gene>
<accession>A4ILL2</accession>
<organism>
    <name type="scientific">Geobacillus thermodenitrificans (strain NG80-2)</name>
    <dbReference type="NCBI Taxonomy" id="420246"/>
    <lineage>
        <taxon>Bacteria</taxon>
        <taxon>Bacillati</taxon>
        <taxon>Bacillota</taxon>
        <taxon>Bacilli</taxon>
        <taxon>Bacillales</taxon>
        <taxon>Anoxybacillaceae</taxon>
        <taxon>Geobacillus</taxon>
    </lineage>
</organism>
<proteinExistence type="inferred from homology"/>
<protein>
    <recommendedName>
        <fullName evidence="1">Methylthioribose kinase</fullName>
        <shortName evidence="1">MTR kinase</shortName>
        <ecNumber evidence="1">2.7.1.100</ecNumber>
    </recommendedName>
</protein>
<reference key="1">
    <citation type="journal article" date="2007" name="Proc. Natl. Acad. Sci. U.S.A.">
        <title>Genome and proteome of long-chain alkane degrading Geobacillus thermodenitrificans NG80-2 isolated from a deep-subsurface oil reservoir.</title>
        <authorList>
            <person name="Feng L."/>
            <person name="Wang W."/>
            <person name="Cheng J."/>
            <person name="Ren Y."/>
            <person name="Zhao G."/>
            <person name="Gao C."/>
            <person name="Tang Y."/>
            <person name="Liu X."/>
            <person name="Han W."/>
            <person name="Peng X."/>
            <person name="Liu R."/>
            <person name="Wang L."/>
        </authorList>
    </citation>
    <scope>NUCLEOTIDE SEQUENCE [LARGE SCALE GENOMIC DNA]</scope>
    <source>
        <strain>NG80-2</strain>
    </source>
</reference>
<feature type="chain" id="PRO_0000357345" description="Methylthioribose kinase">
    <location>
        <begin position="1"/>
        <end position="396"/>
    </location>
</feature>
<feature type="binding site" evidence="1">
    <location>
        <position position="44"/>
    </location>
    <ligand>
        <name>ATP</name>
        <dbReference type="ChEBI" id="CHEBI:30616"/>
    </ligand>
</feature>
<feature type="binding site" evidence="1">
    <location>
        <position position="61"/>
    </location>
    <ligand>
        <name>ATP</name>
        <dbReference type="ChEBI" id="CHEBI:30616"/>
    </ligand>
</feature>
<feature type="binding site" evidence="1">
    <location>
        <begin position="115"/>
        <end position="117"/>
    </location>
    <ligand>
        <name>ATP</name>
        <dbReference type="ChEBI" id="CHEBI:30616"/>
    </ligand>
</feature>
<feature type="binding site" evidence="1">
    <location>
        <position position="233"/>
    </location>
    <ligand>
        <name>substrate</name>
    </ligand>
</feature>
<feature type="binding site" evidence="1">
    <location>
        <begin position="250"/>
        <end position="252"/>
    </location>
    <ligand>
        <name>ATP</name>
        <dbReference type="ChEBI" id="CHEBI:30616"/>
    </ligand>
</feature>
<feature type="binding site" evidence="1">
    <location>
        <position position="340"/>
    </location>
    <ligand>
        <name>substrate</name>
    </ligand>
</feature>
<dbReference type="EC" id="2.7.1.100" evidence="1"/>
<dbReference type="EMBL" id="CP000557">
    <property type="protein sequence ID" value="ABO66216.1"/>
    <property type="molecule type" value="Genomic_DNA"/>
</dbReference>
<dbReference type="RefSeq" id="WP_011887033.1">
    <property type="nucleotide sequence ID" value="NC_009328.1"/>
</dbReference>
<dbReference type="SMR" id="A4ILL2"/>
<dbReference type="KEGG" id="gtn:GTNG_0838"/>
<dbReference type="eggNOG" id="COG4857">
    <property type="taxonomic scope" value="Bacteria"/>
</dbReference>
<dbReference type="HOGENOM" id="CLU_033681_0_0_9"/>
<dbReference type="UniPathway" id="UPA00904">
    <property type="reaction ID" value="UER00872"/>
</dbReference>
<dbReference type="Proteomes" id="UP000001578">
    <property type="component" value="Chromosome"/>
</dbReference>
<dbReference type="GO" id="GO:0005524">
    <property type="term" value="F:ATP binding"/>
    <property type="evidence" value="ECO:0007669"/>
    <property type="project" value="UniProtKB-UniRule"/>
</dbReference>
<dbReference type="GO" id="GO:0046522">
    <property type="term" value="F:S-methyl-5-thioribose kinase activity"/>
    <property type="evidence" value="ECO:0007669"/>
    <property type="project" value="UniProtKB-UniRule"/>
</dbReference>
<dbReference type="GO" id="GO:0019509">
    <property type="term" value="P:L-methionine salvage from methylthioadenosine"/>
    <property type="evidence" value="ECO:0007669"/>
    <property type="project" value="UniProtKB-UniRule"/>
</dbReference>
<dbReference type="Gene3D" id="3.90.1200.10">
    <property type="match status" value="1"/>
</dbReference>
<dbReference type="Gene3D" id="3.30.200.20">
    <property type="entry name" value="Phosphorylase Kinase, domain 1"/>
    <property type="match status" value="1"/>
</dbReference>
<dbReference type="HAMAP" id="MF_01683">
    <property type="entry name" value="Salvage_MtnK"/>
    <property type="match status" value="1"/>
</dbReference>
<dbReference type="InterPro" id="IPR002575">
    <property type="entry name" value="Aminoglycoside_PTrfase"/>
</dbReference>
<dbReference type="InterPro" id="IPR011009">
    <property type="entry name" value="Kinase-like_dom_sf"/>
</dbReference>
<dbReference type="InterPro" id="IPR009212">
    <property type="entry name" value="Methylthioribose_kinase"/>
</dbReference>
<dbReference type="NCBIfam" id="TIGR01767">
    <property type="entry name" value="MTRK"/>
    <property type="match status" value="1"/>
</dbReference>
<dbReference type="PANTHER" id="PTHR34273">
    <property type="entry name" value="METHYLTHIORIBOSE KINASE"/>
    <property type="match status" value="1"/>
</dbReference>
<dbReference type="PANTHER" id="PTHR34273:SF2">
    <property type="entry name" value="METHYLTHIORIBOSE KINASE"/>
    <property type="match status" value="1"/>
</dbReference>
<dbReference type="Pfam" id="PF01636">
    <property type="entry name" value="APH"/>
    <property type="match status" value="1"/>
</dbReference>
<dbReference type="PIRSF" id="PIRSF031134">
    <property type="entry name" value="MTRK"/>
    <property type="match status" value="1"/>
</dbReference>
<dbReference type="SUPFAM" id="SSF56112">
    <property type="entry name" value="Protein kinase-like (PK-like)"/>
    <property type="match status" value="1"/>
</dbReference>
<evidence type="ECO:0000255" key="1">
    <source>
        <dbReference type="HAMAP-Rule" id="MF_01683"/>
    </source>
</evidence>